<keyword id="KW-0325">Glycoprotein</keyword>
<keyword id="KW-1185">Reference proteome</keyword>
<keyword id="KW-0732">Signal</keyword>
<keyword id="KW-0926">Vacuole</keyword>
<proteinExistence type="evidence at transcript level"/>
<feature type="signal peptide" evidence="2">
    <location>
        <begin position="1"/>
        <end position="23"/>
    </location>
</feature>
<feature type="chain" id="PRO_0000431590" description="Protein STRICTOSIDINE SYNTHASE-LIKE 2" evidence="2">
    <location>
        <begin position="24"/>
        <end position="376"/>
    </location>
</feature>
<feature type="glycosylation site" description="N-linked (GlcNAc...) asparagine" evidence="3">
    <location>
        <position position="79"/>
    </location>
</feature>
<feature type="glycosylation site" description="N-linked (GlcNAc...) asparagine" evidence="3">
    <location>
        <position position="244"/>
    </location>
</feature>
<feature type="sequence conflict" description="In Ref. 1; AAC27642." evidence="7" ref="1">
    <original>T</original>
    <variation>N</variation>
    <location>
        <position position="144"/>
    </location>
</feature>
<accession>Q9SLG8</accession>
<accession>O81484</accession>
<name>SSL2_ARATH</name>
<gene>
    <name evidence="5" type="primary">SSL2</name>
    <name evidence="6" type="synonym">SS10</name>
    <name evidence="4" type="synonym">STS</name>
    <name evidence="8" type="ordered locus">At2g41290</name>
    <name evidence="9" type="ORF">F13H10.16</name>
</gene>
<sequence>MMKLLLVVATSVALIFSVTDLSGEGPKHGGESMLTVQIPDFRLIPTTGALGPESFVFDFFGDGPYTGLSDGRIVKWLANESRWIDFAVTTSAREGCEGPHEHQRTEHVCGRPLGLAFDKSTGDLYIADAYMGLLKVGPTGGVATQVLPRELNEALRFTNSLDINPRTGVVYFTDSSSVYQRRNYIGAMMSGDKTGRLMKYDNTKQVTTLLSNLAFVNGVALSQNGDYLLVVETAMCRILRYWLNETSVKSQSHDNYEIFAEGLPGFPDNIKRSPRGGFWVGLNTKHSKLTKFAMSNAWLGRAALGLPVDWMKVHSVWARYNGNGMAVRLSEDSGVILEVFEGKNENKWISISEVEEKDGTLWVGSVNTPFAGMYKI</sequence>
<dbReference type="EMBL" id="AF076979">
    <property type="protein sequence ID" value="AAC27642.1"/>
    <property type="molecule type" value="Genomic_DNA"/>
</dbReference>
<dbReference type="EMBL" id="AC005662">
    <property type="protein sequence ID" value="AAC78543.1"/>
    <property type="molecule type" value="Genomic_DNA"/>
</dbReference>
<dbReference type="EMBL" id="CP002685">
    <property type="protein sequence ID" value="AEC09957.1"/>
    <property type="molecule type" value="Genomic_DNA"/>
</dbReference>
<dbReference type="EMBL" id="BT015732">
    <property type="protein sequence ID" value="AAU84669.1"/>
    <property type="molecule type" value="mRNA"/>
</dbReference>
<dbReference type="EMBL" id="BT020191">
    <property type="protein sequence ID" value="AAV43793.1"/>
    <property type="molecule type" value="mRNA"/>
</dbReference>
<dbReference type="PIR" id="A84840">
    <property type="entry name" value="A84840"/>
</dbReference>
<dbReference type="RefSeq" id="NP_181661.1">
    <property type="nucleotide sequence ID" value="NM_129693.4"/>
</dbReference>
<dbReference type="SMR" id="Q9SLG8"/>
<dbReference type="FunCoup" id="Q9SLG8">
    <property type="interactions" value="1374"/>
</dbReference>
<dbReference type="STRING" id="3702.Q9SLG8"/>
<dbReference type="GlyCosmos" id="Q9SLG8">
    <property type="glycosylation" value="2 sites, No reported glycans"/>
</dbReference>
<dbReference type="GlyGen" id="Q9SLG8">
    <property type="glycosylation" value="3 sites"/>
</dbReference>
<dbReference type="PaxDb" id="3702-AT2G41290.1"/>
<dbReference type="ProteomicsDB" id="228324"/>
<dbReference type="EnsemblPlants" id="AT2G41290.1">
    <property type="protein sequence ID" value="AT2G41290.1"/>
    <property type="gene ID" value="AT2G41290"/>
</dbReference>
<dbReference type="GeneID" id="818728"/>
<dbReference type="Gramene" id="AT2G41290.1">
    <property type="protein sequence ID" value="AT2G41290.1"/>
    <property type="gene ID" value="AT2G41290"/>
</dbReference>
<dbReference type="KEGG" id="ath:AT2G41290"/>
<dbReference type="Araport" id="AT2G41290"/>
<dbReference type="TAIR" id="AT2G41290">
    <property type="gene designation" value="SSL2"/>
</dbReference>
<dbReference type="eggNOG" id="KOG1520">
    <property type="taxonomic scope" value="Eukaryota"/>
</dbReference>
<dbReference type="HOGENOM" id="CLU_023267_2_0_1"/>
<dbReference type="InParanoid" id="Q9SLG8"/>
<dbReference type="OMA" id="QRRNYIS"/>
<dbReference type="PhylomeDB" id="Q9SLG8"/>
<dbReference type="PRO" id="PR:Q9SLG8"/>
<dbReference type="Proteomes" id="UP000006548">
    <property type="component" value="Chromosome 2"/>
</dbReference>
<dbReference type="ExpressionAtlas" id="Q9SLG8">
    <property type="expression patterns" value="baseline and differential"/>
</dbReference>
<dbReference type="GO" id="GO:0005773">
    <property type="term" value="C:vacuole"/>
    <property type="evidence" value="ECO:0007669"/>
    <property type="project" value="UniProtKB-SubCell"/>
</dbReference>
<dbReference type="FunFam" id="2.120.10.30:FF:000032">
    <property type="entry name" value="Protein STRICTOSIDINE SYNTHASE-LIKE 13"/>
    <property type="match status" value="1"/>
</dbReference>
<dbReference type="Gene3D" id="2.120.10.30">
    <property type="entry name" value="TolB, C-terminal domain"/>
    <property type="match status" value="1"/>
</dbReference>
<dbReference type="InterPro" id="IPR011042">
    <property type="entry name" value="6-blade_b-propeller_TolB-like"/>
</dbReference>
<dbReference type="InterPro" id="IPR018119">
    <property type="entry name" value="Strictosidine_synth_cons-reg"/>
</dbReference>
<dbReference type="PANTHER" id="PTHR10426:SF79">
    <property type="entry name" value="PROTEIN STRICTOSIDINE SYNTHASE-LIKE 2"/>
    <property type="match status" value="1"/>
</dbReference>
<dbReference type="PANTHER" id="PTHR10426">
    <property type="entry name" value="STRICTOSIDINE SYNTHASE-RELATED"/>
    <property type="match status" value="1"/>
</dbReference>
<dbReference type="Pfam" id="PF20067">
    <property type="entry name" value="SSL_N"/>
    <property type="match status" value="1"/>
</dbReference>
<dbReference type="Pfam" id="PF03088">
    <property type="entry name" value="Str_synth"/>
    <property type="match status" value="1"/>
</dbReference>
<dbReference type="SUPFAM" id="SSF63829">
    <property type="entry name" value="Calcium-dependent phosphotriesterase"/>
    <property type="match status" value="1"/>
</dbReference>
<comment type="subcellular location">
    <subcellularLocation>
        <location evidence="1">Vacuole</location>
    </subcellularLocation>
</comment>
<comment type="similarity">
    <text evidence="7">Belongs to the strictosidine synthase family.</text>
</comment>
<protein>
    <recommendedName>
        <fullName evidence="5">Protein STRICTOSIDINE SYNTHASE-LIKE 2</fullName>
        <shortName evidence="5">AtSSL2</shortName>
    </recommendedName>
    <alternativeName>
        <fullName evidence="4">Strictosidine synthase</fullName>
    </alternativeName>
    <alternativeName>
        <fullName evidence="6">Strictosidine synthase 10</fullName>
        <shortName evidence="6">AtSS10</shortName>
    </alternativeName>
</protein>
<evidence type="ECO:0000250" key="1"/>
<evidence type="ECO:0000255" key="2"/>
<evidence type="ECO:0000255" key="3">
    <source>
        <dbReference type="PROSITE-ProRule" id="PRU00498"/>
    </source>
</evidence>
<evidence type="ECO:0000303" key="4">
    <source>
    </source>
</evidence>
<evidence type="ECO:0000303" key="5">
    <source>
    </source>
</evidence>
<evidence type="ECO:0000303" key="6">
    <source>
    </source>
</evidence>
<evidence type="ECO:0000305" key="7"/>
<evidence type="ECO:0000312" key="8">
    <source>
        <dbReference type="Araport" id="AT2G41290"/>
    </source>
</evidence>
<evidence type="ECO:0000312" key="9">
    <source>
        <dbReference type="EMBL" id="AAC78543.1"/>
    </source>
</evidence>
<evidence type="ECO:0000312" key="10">
    <source>
        <dbReference type="Proteomes" id="UP000006548"/>
    </source>
</evidence>
<reference key="1">
    <citation type="journal article" date="1999" name="Plant Mol. Biol.">
        <title>Structure, organization and expression of two closely related novel Lea (late-embryogenesis-abundant) genes in Arabidopsis thaliana.</title>
        <authorList>
            <person name="Raynal M."/>
            <person name="Guilleminot J."/>
            <person name="Gueguen C."/>
            <person name="Cooke R."/>
            <person name="Delseny M."/>
            <person name="Gruber V."/>
        </authorList>
    </citation>
    <scope>NUCLEOTIDE SEQUENCE [GENOMIC DNA]</scope>
</reference>
<reference key="2">
    <citation type="journal article" date="1999" name="Nature">
        <title>Sequence and analysis of chromosome 2 of the plant Arabidopsis thaliana.</title>
        <authorList>
            <person name="Lin X."/>
            <person name="Kaul S."/>
            <person name="Rounsley S.D."/>
            <person name="Shea T.P."/>
            <person name="Benito M.-I."/>
            <person name="Town C.D."/>
            <person name="Fujii C.Y."/>
            <person name="Mason T.M."/>
            <person name="Bowman C.L."/>
            <person name="Barnstead M.E."/>
            <person name="Feldblyum T.V."/>
            <person name="Buell C.R."/>
            <person name="Ketchum K.A."/>
            <person name="Lee J.J."/>
            <person name="Ronning C.M."/>
            <person name="Koo H.L."/>
            <person name="Moffat K.S."/>
            <person name="Cronin L.A."/>
            <person name="Shen M."/>
            <person name="Pai G."/>
            <person name="Van Aken S."/>
            <person name="Umayam L."/>
            <person name="Tallon L.J."/>
            <person name="Gill J.E."/>
            <person name="Adams M.D."/>
            <person name="Carrera A.J."/>
            <person name="Creasy T.H."/>
            <person name="Goodman H.M."/>
            <person name="Somerville C.R."/>
            <person name="Copenhaver G.P."/>
            <person name="Preuss D."/>
            <person name="Nierman W.C."/>
            <person name="White O."/>
            <person name="Eisen J.A."/>
            <person name="Salzberg S.L."/>
            <person name="Fraser C.M."/>
            <person name="Venter J.C."/>
        </authorList>
    </citation>
    <scope>NUCLEOTIDE SEQUENCE [LARGE SCALE GENOMIC DNA]</scope>
    <source>
        <strain>cv. Columbia</strain>
    </source>
</reference>
<reference key="3">
    <citation type="journal article" date="2017" name="Plant J.">
        <title>Araport11: a complete reannotation of the Arabidopsis thaliana reference genome.</title>
        <authorList>
            <person name="Cheng C.Y."/>
            <person name="Krishnakumar V."/>
            <person name="Chan A.P."/>
            <person name="Thibaud-Nissen F."/>
            <person name="Schobel S."/>
            <person name="Town C.D."/>
        </authorList>
    </citation>
    <scope>GENOME REANNOTATION</scope>
    <source>
        <strain>cv. Columbia</strain>
    </source>
</reference>
<reference key="4">
    <citation type="submission" date="2004-11" db="EMBL/GenBank/DDBJ databases">
        <title>Arabidopsis ORF clones.</title>
        <authorList>
            <person name="Shinn P."/>
            <person name="Chen H."/>
            <person name="Cheuk R.F."/>
            <person name="Kim C.J."/>
            <person name="Ecker J.R."/>
        </authorList>
    </citation>
    <scope>NUCLEOTIDE SEQUENCE [LARGE SCALE MRNA]</scope>
    <source>
        <strain>cv. Columbia</strain>
    </source>
</reference>
<reference key="5">
    <citation type="journal article" date="2000" name="Biochem. Biophys. Res. Commun.">
        <title>Animal and plant members of a gene family with similarity to alkaloid-synthesizing enzymes.</title>
        <authorList>
            <person name="Fabbri M."/>
            <person name="Delp G."/>
            <person name="Schmidt O."/>
            <person name="Theopold U."/>
        </authorList>
    </citation>
    <scope>GENE FAMILY</scope>
    <scope>NOMENCLATURE</scope>
</reference>
<reference key="6">
    <citation type="journal article" date="2009" name="Plant Biol.">
        <title>Phylogenetic and transcriptional analysis of a strictosidine synthase-like gene family in Arabidopsis thaliana reveals involvement in plant defence responses.</title>
        <authorList>
            <person name="Sohani M.M."/>
            <person name="Schenk P.M."/>
            <person name="Schultz C.J."/>
            <person name="Schmidt O."/>
        </authorList>
    </citation>
    <scope>GENE FAMILY</scope>
    <source>
        <strain>cv. Columbia</strain>
    </source>
</reference>
<organism evidence="10">
    <name type="scientific">Arabidopsis thaliana</name>
    <name type="common">Mouse-ear cress</name>
    <dbReference type="NCBI Taxonomy" id="3702"/>
    <lineage>
        <taxon>Eukaryota</taxon>
        <taxon>Viridiplantae</taxon>
        <taxon>Streptophyta</taxon>
        <taxon>Embryophyta</taxon>
        <taxon>Tracheophyta</taxon>
        <taxon>Spermatophyta</taxon>
        <taxon>Magnoliopsida</taxon>
        <taxon>eudicotyledons</taxon>
        <taxon>Gunneridae</taxon>
        <taxon>Pentapetalae</taxon>
        <taxon>rosids</taxon>
        <taxon>malvids</taxon>
        <taxon>Brassicales</taxon>
        <taxon>Brassicaceae</taxon>
        <taxon>Camelineae</taxon>
        <taxon>Arabidopsis</taxon>
    </lineage>
</organism>